<protein>
    <recommendedName>
        <fullName evidence="1">Type III pantothenate kinase</fullName>
        <ecNumber evidence="1">2.7.1.33</ecNumber>
    </recommendedName>
    <alternativeName>
        <fullName evidence="1">PanK-III</fullName>
    </alternativeName>
    <alternativeName>
        <fullName evidence="1">Pantothenic acid kinase</fullName>
    </alternativeName>
</protein>
<proteinExistence type="inferred from homology"/>
<evidence type="ECO:0000255" key="1">
    <source>
        <dbReference type="HAMAP-Rule" id="MF_01274"/>
    </source>
</evidence>
<feature type="chain" id="PRO_1000165202" description="Type III pantothenate kinase">
    <location>
        <begin position="1"/>
        <end position="272"/>
    </location>
</feature>
<feature type="active site" description="Proton acceptor" evidence="1">
    <location>
        <position position="111"/>
    </location>
</feature>
<feature type="binding site" evidence="1">
    <location>
        <begin position="6"/>
        <end position="13"/>
    </location>
    <ligand>
        <name>ATP</name>
        <dbReference type="ChEBI" id="CHEBI:30616"/>
    </ligand>
</feature>
<feature type="binding site" evidence="1">
    <location>
        <begin position="109"/>
        <end position="112"/>
    </location>
    <ligand>
        <name>substrate</name>
    </ligand>
</feature>
<feature type="binding site" evidence="1">
    <location>
        <position position="131"/>
    </location>
    <ligand>
        <name>K(+)</name>
        <dbReference type="ChEBI" id="CHEBI:29103"/>
    </ligand>
</feature>
<feature type="binding site" evidence="1">
    <location>
        <position position="134"/>
    </location>
    <ligand>
        <name>ATP</name>
        <dbReference type="ChEBI" id="CHEBI:30616"/>
    </ligand>
</feature>
<feature type="binding site" evidence="1">
    <location>
        <position position="186"/>
    </location>
    <ligand>
        <name>substrate</name>
    </ligand>
</feature>
<name>COAX_MYCBT</name>
<accession>C1AI58</accession>
<organism>
    <name type="scientific">Mycobacterium bovis (strain BCG / Tokyo 172 / ATCC 35737 / TMC 1019)</name>
    <dbReference type="NCBI Taxonomy" id="561275"/>
    <lineage>
        <taxon>Bacteria</taxon>
        <taxon>Bacillati</taxon>
        <taxon>Actinomycetota</taxon>
        <taxon>Actinomycetes</taxon>
        <taxon>Mycobacteriales</taxon>
        <taxon>Mycobacteriaceae</taxon>
        <taxon>Mycobacterium</taxon>
        <taxon>Mycobacterium tuberculosis complex</taxon>
    </lineage>
</organism>
<comment type="function">
    <text evidence="1">Catalyzes the phosphorylation of pantothenate (Pan), the first step in CoA biosynthesis.</text>
</comment>
<comment type="catalytic activity">
    <reaction evidence="1">
        <text>(R)-pantothenate + ATP = (R)-4'-phosphopantothenate + ADP + H(+)</text>
        <dbReference type="Rhea" id="RHEA:16373"/>
        <dbReference type="ChEBI" id="CHEBI:10986"/>
        <dbReference type="ChEBI" id="CHEBI:15378"/>
        <dbReference type="ChEBI" id="CHEBI:29032"/>
        <dbReference type="ChEBI" id="CHEBI:30616"/>
        <dbReference type="ChEBI" id="CHEBI:456216"/>
        <dbReference type="EC" id="2.7.1.33"/>
    </reaction>
</comment>
<comment type="cofactor">
    <cofactor evidence="1">
        <name>NH4(+)</name>
        <dbReference type="ChEBI" id="CHEBI:28938"/>
    </cofactor>
    <cofactor evidence="1">
        <name>K(+)</name>
        <dbReference type="ChEBI" id="CHEBI:29103"/>
    </cofactor>
    <text evidence="1">A monovalent cation. Ammonium or potassium.</text>
</comment>
<comment type="pathway">
    <text evidence="1">Cofactor biosynthesis; coenzyme A biosynthesis; CoA from (R)-pantothenate: step 1/5.</text>
</comment>
<comment type="subunit">
    <text evidence="1">Homodimer.</text>
</comment>
<comment type="subcellular location">
    <subcellularLocation>
        <location evidence="1">Cytoplasm</location>
    </subcellularLocation>
</comment>
<comment type="similarity">
    <text evidence="1">Belongs to the type III pantothenate kinase family.</text>
</comment>
<gene>
    <name evidence="1" type="primary">coaX</name>
    <name type="ordered locus">JTY_3665</name>
</gene>
<keyword id="KW-0067">ATP-binding</keyword>
<keyword id="KW-0173">Coenzyme A biosynthesis</keyword>
<keyword id="KW-0963">Cytoplasm</keyword>
<keyword id="KW-0418">Kinase</keyword>
<keyword id="KW-0479">Metal-binding</keyword>
<keyword id="KW-0547">Nucleotide-binding</keyword>
<keyword id="KW-0630">Potassium</keyword>
<keyword id="KW-0808">Transferase</keyword>
<dbReference type="EC" id="2.7.1.33" evidence="1"/>
<dbReference type="EMBL" id="AP010918">
    <property type="protein sequence ID" value="BAH27937.1"/>
    <property type="molecule type" value="Genomic_DNA"/>
</dbReference>
<dbReference type="RefSeq" id="WP_003419517.1">
    <property type="nucleotide sequence ID" value="NZ_CP014566.1"/>
</dbReference>
<dbReference type="SMR" id="C1AI58"/>
<dbReference type="KEGG" id="mbt:JTY_3665"/>
<dbReference type="HOGENOM" id="CLU_066627_1_0_11"/>
<dbReference type="UniPathway" id="UPA00241">
    <property type="reaction ID" value="UER00352"/>
</dbReference>
<dbReference type="GO" id="GO:0005737">
    <property type="term" value="C:cytoplasm"/>
    <property type="evidence" value="ECO:0007669"/>
    <property type="project" value="UniProtKB-SubCell"/>
</dbReference>
<dbReference type="GO" id="GO:0005524">
    <property type="term" value="F:ATP binding"/>
    <property type="evidence" value="ECO:0007669"/>
    <property type="project" value="UniProtKB-UniRule"/>
</dbReference>
<dbReference type="GO" id="GO:0046872">
    <property type="term" value="F:metal ion binding"/>
    <property type="evidence" value="ECO:0007669"/>
    <property type="project" value="UniProtKB-KW"/>
</dbReference>
<dbReference type="GO" id="GO:0004594">
    <property type="term" value="F:pantothenate kinase activity"/>
    <property type="evidence" value="ECO:0007669"/>
    <property type="project" value="UniProtKB-UniRule"/>
</dbReference>
<dbReference type="GO" id="GO:0015937">
    <property type="term" value="P:coenzyme A biosynthetic process"/>
    <property type="evidence" value="ECO:0007669"/>
    <property type="project" value="UniProtKB-UniRule"/>
</dbReference>
<dbReference type="CDD" id="cd24015">
    <property type="entry name" value="ASKHA_NBD_PanK-III"/>
    <property type="match status" value="1"/>
</dbReference>
<dbReference type="FunFam" id="3.30.420.40:FF:000146">
    <property type="entry name" value="Type III pantothenate kinase"/>
    <property type="match status" value="1"/>
</dbReference>
<dbReference type="FunFam" id="3.30.420.40:FF:000223">
    <property type="entry name" value="Type III pantothenate kinase"/>
    <property type="match status" value="1"/>
</dbReference>
<dbReference type="Gene3D" id="3.30.420.40">
    <property type="match status" value="2"/>
</dbReference>
<dbReference type="HAMAP" id="MF_01274">
    <property type="entry name" value="Pantothen_kinase_3"/>
    <property type="match status" value="1"/>
</dbReference>
<dbReference type="InterPro" id="IPR043129">
    <property type="entry name" value="ATPase_NBD"/>
</dbReference>
<dbReference type="InterPro" id="IPR004619">
    <property type="entry name" value="Type_III_PanK"/>
</dbReference>
<dbReference type="NCBIfam" id="TIGR00671">
    <property type="entry name" value="baf"/>
    <property type="match status" value="1"/>
</dbReference>
<dbReference type="NCBIfam" id="NF009845">
    <property type="entry name" value="PRK13318.1-3"/>
    <property type="match status" value="1"/>
</dbReference>
<dbReference type="PANTHER" id="PTHR34265">
    <property type="entry name" value="TYPE III PANTOTHENATE KINASE"/>
    <property type="match status" value="1"/>
</dbReference>
<dbReference type="PANTHER" id="PTHR34265:SF1">
    <property type="entry name" value="TYPE III PANTOTHENATE KINASE"/>
    <property type="match status" value="1"/>
</dbReference>
<dbReference type="Pfam" id="PF03309">
    <property type="entry name" value="Pan_kinase"/>
    <property type="match status" value="1"/>
</dbReference>
<dbReference type="SUPFAM" id="SSF53067">
    <property type="entry name" value="Actin-like ATPase domain"/>
    <property type="match status" value="2"/>
</dbReference>
<sequence>MLLAIDVRNTHTVVGLLSGMKEHAKVVQQWRIRTESEVTADELALTIDGLIGEDSERLTGTAALSTVPSVLHEVRIMLDQYWPSVPHVLIEPGVRTGIPLLVDNPKEVGADRIVNCLAAYDRFRKAAIVVDFGSSICVDVVSAKGEFLGGAIAPGVQVSSDAAAARSAALRRVELARPRSVVGKNTVECMQAGAVFGFAGLVDGLVGRIREDVSGFSVDHDVAIVATGHTAPLLLPELHTVDHYDQHLTLQGLRLVFERNLEVQRGRLKTAR</sequence>
<reference key="1">
    <citation type="journal article" date="2009" name="Vaccine">
        <title>Whole genome sequence analysis of Mycobacterium bovis bacillus Calmette-Guerin (BCG) Tokyo 172: a comparative study of BCG vaccine substrains.</title>
        <authorList>
            <person name="Seki M."/>
            <person name="Honda I."/>
            <person name="Fujita I."/>
            <person name="Yano I."/>
            <person name="Yamamoto S."/>
            <person name="Koyama A."/>
        </authorList>
    </citation>
    <scope>NUCLEOTIDE SEQUENCE [LARGE SCALE GENOMIC DNA]</scope>
    <source>
        <strain>BCG / Tokyo 172 / ATCC 35737 / TMC 1019</strain>
    </source>
</reference>